<name>APS1_ARATH</name>
<gene>
    <name type="primary">APS1</name>
    <name type="ordered locus">At3g22890</name>
    <name type="ORF">F5N5.6</name>
</gene>
<organism>
    <name type="scientific">Arabidopsis thaliana</name>
    <name type="common">Mouse-ear cress</name>
    <dbReference type="NCBI Taxonomy" id="3702"/>
    <lineage>
        <taxon>Eukaryota</taxon>
        <taxon>Viridiplantae</taxon>
        <taxon>Streptophyta</taxon>
        <taxon>Embryophyta</taxon>
        <taxon>Tracheophyta</taxon>
        <taxon>Spermatophyta</taxon>
        <taxon>Magnoliopsida</taxon>
        <taxon>eudicotyledons</taxon>
        <taxon>Gunneridae</taxon>
        <taxon>Pentapetalae</taxon>
        <taxon>rosids</taxon>
        <taxon>malvids</taxon>
        <taxon>Brassicales</taxon>
        <taxon>Brassicaceae</taxon>
        <taxon>Camelineae</taxon>
        <taxon>Arabidopsis</taxon>
    </lineage>
</organism>
<protein>
    <recommendedName>
        <fullName>ATP sulfurylase 1, chloroplastic</fullName>
        <shortName>AtPS1</shortName>
        <ecNumber>2.7.7.4</ecNumber>
    </recommendedName>
</protein>
<comment type="function">
    <text evidence="5">Mediates selenate (Se) reduction, and promotes Se and sulfur (S) uptake and assimilation.</text>
</comment>
<comment type="catalytic activity">
    <reaction evidence="4 5">
        <text>sulfate + ATP + H(+) = adenosine 5'-phosphosulfate + diphosphate</text>
        <dbReference type="Rhea" id="RHEA:18133"/>
        <dbReference type="ChEBI" id="CHEBI:15378"/>
        <dbReference type="ChEBI" id="CHEBI:16189"/>
        <dbReference type="ChEBI" id="CHEBI:30616"/>
        <dbReference type="ChEBI" id="CHEBI:33019"/>
        <dbReference type="ChEBI" id="CHEBI:58243"/>
        <dbReference type="EC" id="2.7.7.4"/>
    </reaction>
</comment>
<comment type="pathway">
    <text>Sulfur metabolism; hydrogen sulfide biosynthesis; sulfite from sulfate: step 1/3.</text>
</comment>
<comment type="subunit">
    <text evidence="1">Homotetramer.</text>
</comment>
<comment type="subcellular location">
    <subcellularLocation>
        <location evidence="3 4">Plastid</location>
        <location evidence="3 4">Chloroplast stroma</location>
    </subcellularLocation>
</comment>
<comment type="induction">
    <text evidence="2">Repressed locally and systemically by phloem-translocated glutathione (GSH).</text>
</comment>
<comment type="similarity">
    <text evidence="6">Belongs to the sulfate adenylyltransferase family.</text>
</comment>
<comment type="sequence caution" evidence="6">
    <conflict type="frameshift">
        <sequence resource="EMBL-CDS" id="AAA21570"/>
    </conflict>
</comment>
<comment type="sequence caution" evidence="6">
    <conflict type="frameshift">
        <sequence resource="EMBL-CDS" id="AAF19185"/>
    </conflict>
</comment>
<comment type="sequence caution" evidence="6">
    <conflict type="erroneous initiation">
        <sequence resource="EMBL-CDS" id="BAD95100"/>
    </conflict>
    <text>Truncated N-terminus.</text>
</comment>
<evidence type="ECO:0000250" key="1"/>
<evidence type="ECO:0000269" key="2">
    <source>
    </source>
</evidence>
<evidence type="ECO:0000269" key="3">
    <source>
    </source>
</evidence>
<evidence type="ECO:0000269" key="4">
    <source>
    </source>
</evidence>
<evidence type="ECO:0000269" key="5">
    <source>
    </source>
</evidence>
<evidence type="ECO:0000305" key="6"/>
<keyword id="KW-0067">ATP-binding</keyword>
<keyword id="KW-0150">Chloroplast</keyword>
<keyword id="KW-0547">Nucleotide-binding</keyword>
<keyword id="KW-0548">Nucleotidyltransferase</keyword>
<keyword id="KW-0934">Plastid</keyword>
<keyword id="KW-1185">Reference proteome</keyword>
<keyword id="KW-0808">Transferase</keyword>
<keyword id="KW-0809">Transit peptide</keyword>
<feature type="transit peptide" description="Chloroplast" evidence="6">
    <location>
        <begin position="1"/>
        <end position="48"/>
    </location>
</feature>
<feature type="chain" id="PRO_0000410869" description="ATP sulfurylase 1, chloroplastic">
    <location>
        <begin position="49"/>
        <end position="463"/>
    </location>
</feature>
<feature type="sequence conflict" description="In Ref. 1; AAA21570." evidence="6" ref="1">
    <original>E</original>
    <variation>G</variation>
    <location>
        <position position="60"/>
    </location>
</feature>
<feature type="sequence conflict" description="In Ref. 7; AAM63185." evidence="6" ref="7">
    <original>A</original>
    <variation>T</variation>
    <location>
        <position position="99"/>
    </location>
</feature>
<feature type="sequence conflict" description="In Ref. 7; AAM63185." evidence="6" ref="7">
    <original>A</original>
    <variation>S</variation>
    <location>
        <position position="163"/>
    </location>
</feature>
<accession>Q9LIK9</accession>
<accession>Q42278</accession>
<accession>Q42519</accession>
<accession>Q56Z36</accession>
<accession>Q8LDJ6</accession>
<accession>Q9SE02</accession>
<reference key="1">
    <citation type="journal article" date="1994" name="Plant Physiol.">
        <title>Cloning of a cDNA encoding ATP sulfurylase from Arabidopsis thaliana by functional expression in Saccharomyces cerevisiae.</title>
        <authorList>
            <person name="Leustek T."/>
            <person name="Murillo M."/>
            <person name="Cervantes M."/>
        </authorList>
    </citation>
    <scope>NUCLEOTIDE SEQUENCE [MRNA]</scope>
    <scope>CATALYTIC ACTIVITY</scope>
    <scope>SUBCELLULAR LOCATION</scope>
</reference>
<reference key="2">
    <citation type="journal article" date="2000" name="Gene">
        <title>Functional characterization of a gene encoding a fourth ATP sulfurylase isoform from Arabidopsis thaliana.</title>
        <authorList>
            <person name="Hatzfeld Y."/>
            <person name="Lee S."/>
            <person name="Lee M."/>
            <person name="Leustek T."/>
            <person name="Saito K."/>
        </authorList>
    </citation>
    <scope>NUCLEOTIDE SEQUENCE [GENOMIC DNA]</scope>
    <source>
        <strain>cv. Columbia</strain>
    </source>
</reference>
<reference key="3">
    <citation type="journal article" date="2000" name="DNA Res.">
        <title>Structural analysis of Arabidopsis thaliana chromosome 3. II. Sequence features of the 4,251,695 bp regions covered by 90 P1, TAC and BAC clones.</title>
        <authorList>
            <person name="Kaneko T."/>
            <person name="Katoh T."/>
            <person name="Sato S."/>
            <person name="Nakamura Y."/>
            <person name="Asamizu E."/>
            <person name="Tabata S."/>
        </authorList>
    </citation>
    <scope>NUCLEOTIDE SEQUENCE [LARGE SCALE GENOMIC DNA]</scope>
    <source>
        <strain>cv. Columbia</strain>
    </source>
</reference>
<reference key="4">
    <citation type="journal article" date="2017" name="Plant J.">
        <title>Araport11: a complete reannotation of the Arabidopsis thaliana reference genome.</title>
        <authorList>
            <person name="Cheng C.Y."/>
            <person name="Krishnakumar V."/>
            <person name="Chan A.P."/>
            <person name="Thibaud-Nissen F."/>
            <person name="Schobel S."/>
            <person name="Town C.D."/>
        </authorList>
    </citation>
    <scope>GENOME REANNOTATION</scope>
    <source>
        <strain>cv. Columbia</strain>
    </source>
</reference>
<reference key="5">
    <citation type="journal article" date="2003" name="Science">
        <title>Empirical analysis of transcriptional activity in the Arabidopsis genome.</title>
        <authorList>
            <person name="Yamada K."/>
            <person name="Lim J."/>
            <person name="Dale J.M."/>
            <person name="Chen H."/>
            <person name="Shinn P."/>
            <person name="Palm C.J."/>
            <person name="Southwick A.M."/>
            <person name="Wu H.C."/>
            <person name="Kim C.J."/>
            <person name="Nguyen M."/>
            <person name="Pham P.K."/>
            <person name="Cheuk R.F."/>
            <person name="Karlin-Newmann G."/>
            <person name="Liu S.X."/>
            <person name="Lam B."/>
            <person name="Sakano H."/>
            <person name="Wu T."/>
            <person name="Yu G."/>
            <person name="Miranda M."/>
            <person name="Quach H.L."/>
            <person name="Tripp M."/>
            <person name="Chang C.H."/>
            <person name="Lee J.M."/>
            <person name="Toriumi M.J."/>
            <person name="Chan M.M."/>
            <person name="Tang C.C."/>
            <person name="Onodera C.S."/>
            <person name="Deng J.M."/>
            <person name="Akiyama K."/>
            <person name="Ansari Y."/>
            <person name="Arakawa T."/>
            <person name="Banh J."/>
            <person name="Banno F."/>
            <person name="Bowser L."/>
            <person name="Brooks S.Y."/>
            <person name="Carninci P."/>
            <person name="Chao Q."/>
            <person name="Choy N."/>
            <person name="Enju A."/>
            <person name="Goldsmith A.D."/>
            <person name="Gurjal M."/>
            <person name="Hansen N.F."/>
            <person name="Hayashizaki Y."/>
            <person name="Johnson-Hopson C."/>
            <person name="Hsuan V.W."/>
            <person name="Iida K."/>
            <person name="Karnes M."/>
            <person name="Khan S."/>
            <person name="Koesema E."/>
            <person name="Ishida J."/>
            <person name="Jiang P.X."/>
            <person name="Jones T."/>
            <person name="Kawai J."/>
            <person name="Kamiya A."/>
            <person name="Meyers C."/>
            <person name="Nakajima M."/>
            <person name="Narusaka M."/>
            <person name="Seki M."/>
            <person name="Sakurai T."/>
            <person name="Satou M."/>
            <person name="Tamse R."/>
            <person name="Vaysberg M."/>
            <person name="Wallender E.K."/>
            <person name="Wong C."/>
            <person name="Yamamura Y."/>
            <person name="Yuan S."/>
            <person name="Shinozaki K."/>
            <person name="Davis R.W."/>
            <person name="Theologis A."/>
            <person name="Ecker J.R."/>
        </authorList>
    </citation>
    <scope>NUCLEOTIDE SEQUENCE [LARGE SCALE MRNA]</scope>
    <source>
        <strain>cv. Columbia</strain>
    </source>
</reference>
<reference key="6">
    <citation type="submission" date="2006-07" db="EMBL/GenBank/DDBJ databases">
        <title>Large-scale analysis of RIKEN Arabidopsis full-length (RAFL) cDNAs.</title>
        <authorList>
            <person name="Totoki Y."/>
            <person name="Seki M."/>
            <person name="Ishida J."/>
            <person name="Nakajima M."/>
            <person name="Enju A."/>
            <person name="Kamiya A."/>
            <person name="Narusaka M."/>
            <person name="Shin-i T."/>
            <person name="Nakagawa M."/>
            <person name="Sakamoto N."/>
            <person name="Oishi K."/>
            <person name="Kohara Y."/>
            <person name="Kobayashi M."/>
            <person name="Toyoda A."/>
            <person name="Sakaki Y."/>
            <person name="Sakurai T."/>
            <person name="Iida K."/>
            <person name="Akiyama K."/>
            <person name="Satou M."/>
            <person name="Toyoda T."/>
            <person name="Konagaya A."/>
            <person name="Carninci P."/>
            <person name="Kawai J."/>
            <person name="Hayashizaki Y."/>
            <person name="Shinozaki K."/>
        </authorList>
    </citation>
    <scope>NUCLEOTIDE SEQUENCE [LARGE SCALE MRNA]</scope>
    <source>
        <strain>cv. Columbia</strain>
    </source>
</reference>
<reference key="7">
    <citation type="submission" date="2002-03" db="EMBL/GenBank/DDBJ databases">
        <title>Full-length cDNA from Arabidopsis thaliana.</title>
        <authorList>
            <person name="Brover V.V."/>
            <person name="Troukhan M.E."/>
            <person name="Alexandrov N.A."/>
            <person name="Lu Y.-P."/>
            <person name="Flavell R.B."/>
            <person name="Feldmann K.A."/>
        </authorList>
    </citation>
    <scope>NUCLEOTIDE SEQUENCE [LARGE SCALE MRNA]</scope>
</reference>
<reference key="8">
    <citation type="submission" date="1994-06" db="EMBL/GenBank/DDBJ databases">
        <title>The Arabidopsis thaliana transcribed genome: the GDR cDNA program.</title>
        <authorList>
            <person name="Desprez T."/>
            <person name="Amselem J."/>
            <person name="Chiapello H."/>
            <person name="Caboche M."/>
            <person name="Hofte H."/>
        </authorList>
    </citation>
    <scope>NUCLEOTIDE SEQUENCE [LARGE SCALE MRNA] OF 1-93</scope>
    <source>
        <strain>cv. Columbia</strain>
        <tissue>Seedling</tissue>
    </source>
</reference>
<reference key="9">
    <citation type="journal article" date="1999" name="Plant J.">
        <title>Inter-organ signaling in plants: regulation of ATP sulfurylase and sulfate transporter genes expression in roots mediated by phloem-translocated compound.</title>
        <authorList>
            <person name="Lappartient A.G."/>
            <person name="Vidmar J.J."/>
            <person name="Leustek T."/>
            <person name="Glass A.D.M."/>
            <person name="Touraine B."/>
        </authorList>
    </citation>
    <scope>INDUCTION BY GSH</scope>
</reference>
<reference key="10">
    <citation type="journal article" date="1999" name="Plant Physiol.">
        <title>Overexpression of ATP sulfurylase in indian mustard leads to increased selenate uptake, reduction, and tolerance.</title>
        <authorList>
            <person name="Pilon-Smits E.A.H."/>
            <person name="Hwang S."/>
            <person name="Mel Lytle C."/>
            <person name="Zhu Y."/>
            <person name="Tai J.C."/>
            <person name="Bravo R.C."/>
            <person name="Chen Y."/>
            <person name="Leustek T."/>
            <person name="Terry N."/>
        </authorList>
    </citation>
    <scope>FUNCTION</scope>
    <scope>CATALYTIC ACTIVITY</scope>
</reference>
<reference key="11">
    <citation type="journal article" date="2008" name="PLoS ONE">
        <title>Sorting signals, N-terminal modifications and abundance of the chloroplast proteome.</title>
        <authorList>
            <person name="Zybailov B."/>
            <person name="Rutschow H."/>
            <person name="Friso G."/>
            <person name="Rudella A."/>
            <person name="Emanuelsson O."/>
            <person name="Sun Q."/>
            <person name="van Wijk K.J."/>
        </authorList>
    </citation>
    <scope>IDENTIFICATION BY MASS SPECTROMETRY</scope>
    <scope>SUBCELLULAR LOCATION [LARGE SCALE ANALYSIS]</scope>
</reference>
<proteinExistence type="evidence at protein level"/>
<dbReference type="EC" id="2.7.7.4"/>
<dbReference type="EMBL" id="U05218">
    <property type="protein sequence ID" value="AAA21570.1"/>
    <property type="status" value="ALT_FRAME"/>
    <property type="molecule type" value="mRNA"/>
</dbReference>
<dbReference type="EMBL" id="AF198964">
    <property type="protein sequence ID" value="AAF19185.1"/>
    <property type="status" value="ALT_FRAME"/>
    <property type="molecule type" value="Genomic_DNA"/>
</dbReference>
<dbReference type="EMBL" id="AP001300">
    <property type="protein sequence ID" value="BAB03034.1"/>
    <property type="molecule type" value="Genomic_DNA"/>
</dbReference>
<dbReference type="EMBL" id="CP002686">
    <property type="protein sequence ID" value="AEE76688.1"/>
    <property type="molecule type" value="Genomic_DNA"/>
</dbReference>
<dbReference type="EMBL" id="AF370492">
    <property type="protein sequence ID" value="AAK43869.1"/>
    <property type="molecule type" value="mRNA"/>
</dbReference>
<dbReference type="EMBL" id="AY050869">
    <property type="protein sequence ID" value="AAK92806.1"/>
    <property type="molecule type" value="mRNA"/>
</dbReference>
<dbReference type="EMBL" id="AY054169">
    <property type="protein sequence ID" value="AAL06830.1"/>
    <property type="molecule type" value="mRNA"/>
</dbReference>
<dbReference type="EMBL" id="AY064648">
    <property type="protein sequence ID" value="AAL47359.1"/>
    <property type="molecule type" value="mRNA"/>
</dbReference>
<dbReference type="EMBL" id="AY091207">
    <property type="protein sequence ID" value="AAM14146.1"/>
    <property type="molecule type" value="mRNA"/>
</dbReference>
<dbReference type="EMBL" id="BT002538">
    <property type="protein sequence ID" value="AAO00898.1"/>
    <property type="molecule type" value="mRNA"/>
</dbReference>
<dbReference type="EMBL" id="AK221133">
    <property type="protein sequence ID" value="BAD95100.1"/>
    <property type="status" value="ALT_INIT"/>
    <property type="molecule type" value="mRNA"/>
</dbReference>
<dbReference type="EMBL" id="AK226559">
    <property type="protein sequence ID" value="BAE98690.1"/>
    <property type="molecule type" value="mRNA"/>
</dbReference>
<dbReference type="EMBL" id="AY085975">
    <property type="protein sequence ID" value="AAM63185.1"/>
    <property type="molecule type" value="mRNA"/>
</dbReference>
<dbReference type="EMBL" id="Z34534">
    <property type="protein sequence ID" value="CAA84304.1"/>
    <property type="molecule type" value="mRNA"/>
</dbReference>
<dbReference type="RefSeq" id="NP_188929.1">
    <property type="nucleotide sequence ID" value="NM_113189.5"/>
</dbReference>
<dbReference type="SMR" id="Q9LIK9"/>
<dbReference type="BioGRID" id="7193">
    <property type="interactions" value="3"/>
</dbReference>
<dbReference type="FunCoup" id="Q9LIK9">
    <property type="interactions" value="2630"/>
</dbReference>
<dbReference type="STRING" id="3702.Q9LIK9"/>
<dbReference type="MetOSite" id="Q9LIK9"/>
<dbReference type="PaxDb" id="3702-AT3G22890.1"/>
<dbReference type="ProteomicsDB" id="244477"/>
<dbReference type="EnsemblPlants" id="AT3G22890.1">
    <property type="protein sequence ID" value="AT3G22890.1"/>
    <property type="gene ID" value="AT3G22890"/>
</dbReference>
<dbReference type="GeneID" id="821861"/>
<dbReference type="Gramene" id="AT3G22890.1">
    <property type="protein sequence ID" value="AT3G22890.1"/>
    <property type="gene ID" value="AT3G22890"/>
</dbReference>
<dbReference type="KEGG" id="ath:AT3G22890"/>
<dbReference type="Araport" id="AT3G22890"/>
<dbReference type="TAIR" id="AT3G22890">
    <property type="gene designation" value="APS1"/>
</dbReference>
<dbReference type="eggNOG" id="KOG0636">
    <property type="taxonomic scope" value="Eukaryota"/>
</dbReference>
<dbReference type="HOGENOM" id="CLU_009463_2_0_1"/>
<dbReference type="InParanoid" id="Q9LIK9"/>
<dbReference type="OMA" id="IEIYKHH"/>
<dbReference type="OrthoDB" id="506431at2759"/>
<dbReference type="PhylomeDB" id="Q9LIK9"/>
<dbReference type="BioCyc" id="ARA:AT3G22890-MONOMER"/>
<dbReference type="BioCyc" id="MetaCyc:AT3G22890-MONOMER"/>
<dbReference type="BRENDA" id="2.7.7.4">
    <property type="organism ID" value="399"/>
</dbReference>
<dbReference type="UniPathway" id="UPA00140">
    <property type="reaction ID" value="UER00204"/>
</dbReference>
<dbReference type="CD-CODE" id="4299E36E">
    <property type="entry name" value="Nucleolus"/>
</dbReference>
<dbReference type="PRO" id="PR:Q9LIK9"/>
<dbReference type="Proteomes" id="UP000006548">
    <property type="component" value="Chromosome 3"/>
</dbReference>
<dbReference type="ExpressionAtlas" id="Q9LIK9">
    <property type="expression patterns" value="baseline and differential"/>
</dbReference>
<dbReference type="GO" id="GO:0009507">
    <property type="term" value="C:chloroplast"/>
    <property type="evidence" value="ECO:0000314"/>
    <property type="project" value="TAIR"/>
</dbReference>
<dbReference type="GO" id="GO:0009570">
    <property type="term" value="C:chloroplast stroma"/>
    <property type="evidence" value="ECO:0007005"/>
    <property type="project" value="TAIR"/>
</dbReference>
<dbReference type="GO" id="GO:0005524">
    <property type="term" value="F:ATP binding"/>
    <property type="evidence" value="ECO:0007669"/>
    <property type="project" value="UniProtKB-KW"/>
</dbReference>
<dbReference type="GO" id="GO:0004781">
    <property type="term" value="F:sulfate adenylyltransferase (ATP) activity"/>
    <property type="evidence" value="ECO:0000304"/>
    <property type="project" value="TAIR"/>
</dbReference>
<dbReference type="GO" id="GO:0070814">
    <property type="term" value="P:hydrogen sulfide biosynthetic process"/>
    <property type="evidence" value="ECO:0007669"/>
    <property type="project" value="UniProtKB-UniPathway"/>
</dbReference>
<dbReference type="GO" id="GO:0046686">
    <property type="term" value="P:response to cadmium ion"/>
    <property type="evidence" value="ECO:0000270"/>
    <property type="project" value="TAIR"/>
</dbReference>
<dbReference type="GO" id="GO:0001887">
    <property type="term" value="P:selenium compound metabolic process"/>
    <property type="evidence" value="ECO:0000315"/>
    <property type="project" value="TAIR"/>
</dbReference>
<dbReference type="GO" id="GO:0000103">
    <property type="term" value="P:sulfate assimilation"/>
    <property type="evidence" value="ECO:0007669"/>
    <property type="project" value="InterPro"/>
</dbReference>
<dbReference type="CDD" id="cd00517">
    <property type="entry name" value="ATPS"/>
    <property type="match status" value="1"/>
</dbReference>
<dbReference type="FunFam" id="3.10.400.10:FF:000002">
    <property type="entry name" value="ATP sulfurylase 2"/>
    <property type="match status" value="1"/>
</dbReference>
<dbReference type="FunFam" id="3.40.50.620:FF:000006">
    <property type="entry name" value="bifunctional 3'-phosphoadenosine 5'-phosphosulfate synthase 1"/>
    <property type="match status" value="1"/>
</dbReference>
<dbReference type="Gene3D" id="3.40.50.620">
    <property type="entry name" value="HUPs"/>
    <property type="match status" value="1"/>
</dbReference>
<dbReference type="Gene3D" id="3.10.400.10">
    <property type="entry name" value="Sulfate adenylyltransferase"/>
    <property type="match status" value="1"/>
</dbReference>
<dbReference type="InterPro" id="IPR025980">
    <property type="entry name" value="ATP-Sase_PUA-like_dom"/>
</dbReference>
<dbReference type="InterPro" id="IPR015947">
    <property type="entry name" value="PUA-like_sf"/>
</dbReference>
<dbReference type="InterPro" id="IPR014729">
    <property type="entry name" value="Rossmann-like_a/b/a_fold"/>
</dbReference>
<dbReference type="InterPro" id="IPR024951">
    <property type="entry name" value="Sulfurylase_cat_dom"/>
</dbReference>
<dbReference type="InterPro" id="IPR002650">
    <property type="entry name" value="Sulphate_adenylyltransferase"/>
</dbReference>
<dbReference type="NCBIfam" id="TIGR00339">
    <property type="entry name" value="sopT"/>
    <property type="match status" value="1"/>
</dbReference>
<dbReference type="PANTHER" id="PTHR11055:SF46">
    <property type="entry name" value="ATP SULFURYLASE 1, CHLOROPLASTIC"/>
    <property type="match status" value="1"/>
</dbReference>
<dbReference type="PANTHER" id="PTHR11055">
    <property type="entry name" value="BIFUNCTIONAL 3'-PHOSPHOADENOSINE 5'-PHOSPHOSULFATE SYNTHASE"/>
    <property type="match status" value="1"/>
</dbReference>
<dbReference type="Pfam" id="PF01747">
    <property type="entry name" value="ATP-sulfurylase"/>
    <property type="match status" value="1"/>
</dbReference>
<dbReference type="Pfam" id="PF14306">
    <property type="entry name" value="PUA_2"/>
    <property type="match status" value="1"/>
</dbReference>
<dbReference type="SUPFAM" id="SSF52374">
    <property type="entry name" value="Nucleotidylyl transferase"/>
    <property type="match status" value="1"/>
</dbReference>
<dbReference type="SUPFAM" id="SSF88697">
    <property type="entry name" value="PUA domain-like"/>
    <property type="match status" value="1"/>
</dbReference>
<sequence>MASMAAVLSKTPFLSQPLTKSSPNSDLPFAAVSFPSKSLRRRVGSIRAGLIAPDGGKLVELIVEEPKRREKKHEAADLPRVELTAIDLQWMHVLSEGWASPLGGFMRESEFLQTLHFNSLRLDDGSVVNMSVPIVLAIDDEQKARIGESTRVALFNSDGNPVAILSDIEIYKHPKEERIARTWGTTAPGLPYVDEAITNAGNWLIGGDLEVLEPVKYNDGLDRFRLSPAELRKELEKRNADAVFAFQLRNPVHNGHALLMTDTRRRLLEMGYKNPILLLHPLGGFTKADDVPLDWRMKQHEKVLEDGVLDPETTVVSIFPSPMHYAGPTEVQWHAKARINAGANFYIVGRDPAGMGHPVEKRDLYDADHGKKVLSMAPGLERLNILPFRVAAYDKTQGKMAFFDPSRPQDFLFISGTKMRTLAKNNENPPDGFMCPGGWKVLVDYYESLTPAGNGRLPEVVPV</sequence>